<comment type="function">
    <text evidence="1">Catalyzes the oxidation of malonate semialdehyde (MSA) and methylmalonate semialdehyde (MMSA) into acetyl-CoA and propanoyl-CoA, respectively. Is involved in a myo-inositol catabolic pathway. Bicarbonate, and not CO2, is the end-product of the enzymatic reaction.</text>
</comment>
<comment type="catalytic activity">
    <reaction evidence="1">
        <text>3-oxopropanoate + NAD(+) + CoA + H2O = hydrogencarbonate + acetyl-CoA + NADH + H(+)</text>
        <dbReference type="Rhea" id="RHEA:76615"/>
        <dbReference type="ChEBI" id="CHEBI:15377"/>
        <dbReference type="ChEBI" id="CHEBI:15378"/>
        <dbReference type="ChEBI" id="CHEBI:17544"/>
        <dbReference type="ChEBI" id="CHEBI:33190"/>
        <dbReference type="ChEBI" id="CHEBI:57287"/>
        <dbReference type="ChEBI" id="CHEBI:57288"/>
        <dbReference type="ChEBI" id="CHEBI:57540"/>
        <dbReference type="ChEBI" id="CHEBI:57945"/>
        <dbReference type="EC" id="1.2.1.27"/>
    </reaction>
    <physiologicalReaction direction="left-to-right" evidence="1">
        <dbReference type="Rhea" id="RHEA:76616"/>
    </physiologicalReaction>
</comment>
<comment type="catalytic activity">
    <reaction evidence="1">
        <text>2-methyl-3-oxopropanoate + NAD(+) + CoA + H2O = propanoyl-CoA + hydrogencarbonate + NADH + H(+)</text>
        <dbReference type="Rhea" id="RHEA:20804"/>
        <dbReference type="ChEBI" id="CHEBI:15377"/>
        <dbReference type="ChEBI" id="CHEBI:15378"/>
        <dbReference type="ChEBI" id="CHEBI:17544"/>
        <dbReference type="ChEBI" id="CHEBI:57287"/>
        <dbReference type="ChEBI" id="CHEBI:57392"/>
        <dbReference type="ChEBI" id="CHEBI:57540"/>
        <dbReference type="ChEBI" id="CHEBI:57700"/>
        <dbReference type="ChEBI" id="CHEBI:57945"/>
        <dbReference type="EC" id="1.2.1.27"/>
    </reaction>
    <physiologicalReaction direction="left-to-right" evidence="1">
        <dbReference type="Rhea" id="RHEA:20805"/>
    </physiologicalReaction>
</comment>
<comment type="pathway">
    <text evidence="1">Polyol metabolism; myo-inositol degradation into acetyl-CoA; acetyl-CoA from myo-inositol: step 7/7.</text>
</comment>
<comment type="subunit">
    <text evidence="1">Homotetramer.</text>
</comment>
<comment type="similarity">
    <text evidence="1">Belongs to the aldehyde dehydrogenase family. IolA subfamily.</text>
</comment>
<name>IOLA_BACP2</name>
<accession>A8FDV4</accession>
<evidence type="ECO:0000255" key="1">
    <source>
        <dbReference type="HAMAP-Rule" id="MF_01670"/>
    </source>
</evidence>
<sequence>MTKTDVQMLKNYIGGQWIEAETSQTEAVYNPATGKIIAEVPLSTKKDVERAVQAAQEAFTTWSKTPVPRRARILFKYQQLLVDKWDELAELVTMENGKSITEAKGEVQRGIECVEFAAGAPTLMMGKQLPDIASGLESGMYRYPIGVIGGITPFNFPMMVPCWMFPLAIACGNTFVLKPSERTPILAARLAELFEEAGLPKGVLNIVNGAHDVVNGLLEHQKVKAISFVGSQPVAEYVYKKGTEHGKRVQALAGAKNHSIVLKDADLDAATKQIIGAAFGSAGERCMAAAVVAVEEEVADDLIQKLVDESNELVIGNGINEEVFLGPVIREEHKERTLQYIQSGIEEGASLIRDGRKDHETNGKGYFVGPTIFDHVTNQMKIWQDEIFAPVLSIVRVSSLAEAIDLSNQSKFANGACLYTDSASSIREFRENIEAGMLGVNIGVPAPMAFFPFSGWKDSFYGDLHANGTDGVEFYTRKKMVTARYM</sequence>
<feature type="chain" id="PRO_0000352331" description="Malonate-semialdehyde dehydrogenase">
    <location>
        <begin position="1"/>
        <end position="486"/>
    </location>
</feature>
<feature type="active site" description="Nucleophile" evidence="1">
    <location>
        <position position="286"/>
    </location>
</feature>
<feature type="binding site" evidence="1">
    <location>
        <position position="154"/>
    </location>
    <ligand>
        <name>NAD(+)</name>
        <dbReference type="ChEBI" id="CHEBI:57540"/>
    </ligand>
</feature>
<feature type="binding site" evidence="1">
    <location>
        <position position="178"/>
    </location>
    <ligand>
        <name>NAD(+)</name>
        <dbReference type="ChEBI" id="CHEBI:57540"/>
    </ligand>
</feature>
<feature type="binding site" evidence="1">
    <location>
        <position position="181"/>
    </location>
    <ligand>
        <name>NAD(+)</name>
        <dbReference type="ChEBI" id="CHEBI:57540"/>
    </ligand>
</feature>
<feature type="binding site" evidence="1">
    <location>
        <position position="182"/>
    </location>
    <ligand>
        <name>NAD(+)</name>
        <dbReference type="ChEBI" id="CHEBI:57540"/>
    </ligand>
</feature>
<feature type="binding site" evidence="1">
    <location>
        <position position="231"/>
    </location>
    <ligand>
        <name>NAD(+)</name>
        <dbReference type="ChEBI" id="CHEBI:57540"/>
    </ligand>
</feature>
<feature type="binding site" evidence="1">
    <location>
        <position position="386"/>
    </location>
    <ligand>
        <name>NAD(+)</name>
        <dbReference type="ChEBI" id="CHEBI:57540"/>
    </ligand>
</feature>
<organism>
    <name type="scientific">Bacillus pumilus (strain SAFR-032)</name>
    <dbReference type="NCBI Taxonomy" id="315750"/>
    <lineage>
        <taxon>Bacteria</taxon>
        <taxon>Bacillati</taxon>
        <taxon>Bacillota</taxon>
        <taxon>Bacilli</taxon>
        <taxon>Bacillales</taxon>
        <taxon>Bacillaceae</taxon>
        <taxon>Bacillus</taxon>
    </lineage>
</organism>
<reference key="1">
    <citation type="journal article" date="2007" name="PLoS ONE">
        <title>Paradoxical DNA repair and peroxide resistance gene conservation in Bacillus pumilus SAFR-032.</title>
        <authorList>
            <person name="Gioia J."/>
            <person name="Yerrapragada S."/>
            <person name="Qin X."/>
            <person name="Jiang H."/>
            <person name="Igboeli O.C."/>
            <person name="Muzny D."/>
            <person name="Dugan-Rocha S."/>
            <person name="Ding Y."/>
            <person name="Hawes A."/>
            <person name="Liu W."/>
            <person name="Perez L."/>
            <person name="Kovar C."/>
            <person name="Dinh H."/>
            <person name="Lee S."/>
            <person name="Nazareth L."/>
            <person name="Blyth P."/>
            <person name="Holder M."/>
            <person name="Buhay C."/>
            <person name="Tirumalai M.R."/>
            <person name="Liu Y."/>
            <person name="Dasgupta I."/>
            <person name="Bokhetache L."/>
            <person name="Fujita M."/>
            <person name="Karouia F."/>
            <person name="Eswara Moorthy P."/>
            <person name="Siefert J."/>
            <person name="Uzman A."/>
            <person name="Buzumbo P."/>
            <person name="Verma A."/>
            <person name="Zwiya H."/>
            <person name="McWilliams B.D."/>
            <person name="Olowu A."/>
            <person name="Clinkenbeard K.D."/>
            <person name="Newcombe D."/>
            <person name="Golebiewski L."/>
            <person name="Petrosino J.F."/>
            <person name="Nicholson W.L."/>
            <person name="Fox G.E."/>
            <person name="Venkateswaran K."/>
            <person name="Highlander S.K."/>
            <person name="Weinstock G.M."/>
        </authorList>
    </citation>
    <scope>NUCLEOTIDE SEQUENCE [LARGE SCALE GENOMIC DNA]</scope>
    <source>
        <strain>SAFR-032</strain>
    </source>
</reference>
<protein>
    <recommendedName>
        <fullName evidence="1">Malonate-semialdehyde dehydrogenase</fullName>
        <shortName evidence="1">MSA dehydrogenase</shortName>
        <ecNumber evidence="1">1.2.1.27</ecNumber>
    </recommendedName>
    <alternativeName>
        <fullName evidence="1">Methylmalonate-semialdehyde dehydrogenase</fullName>
        <shortName evidence="1">MMSA dehydrogenase</shortName>
        <shortName evidence="1">MSDH</shortName>
    </alternativeName>
</protein>
<keyword id="KW-0520">NAD</keyword>
<keyword id="KW-0560">Oxidoreductase</keyword>
<dbReference type="EC" id="1.2.1.27" evidence="1"/>
<dbReference type="EMBL" id="CP000813">
    <property type="protein sequence ID" value="ABV62421.1"/>
    <property type="molecule type" value="Genomic_DNA"/>
</dbReference>
<dbReference type="RefSeq" id="WP_012010148.1">
    <property type="nucleotide sequence ID" value="NC_009848.4"/>
</dbReference>
<dbReference type="SMR" id="A8FDV4"/>
<dbReference type="STRING" id="315750.BPUM_1749"/>
<dbReference type="GeneID" id="5621010"/>
<dbReference type="KEGG" id="bpu:BPUM_1749"/>
<dbReference type="eggNOG" id="COG1012">
    <property type="taxonomic scope" value="Bacteria"/>
</dbReference>
<dbReference type="HOGENOM" id="CLU_005391_1_0_9"/>
<dbReference type="OrthoDB" id="9762913at2"/>
<dbReference type="UniPathway" id="UPA00076">
    <property type="reaction ID" value="UER00148"/>
</dbReference>
<dbReference type="Proteomes" id="UP000001355">
    <property type="component" value="Chromosome"/>
</dbReference>
<dbReference type="GO" id="GO:0018478">
    <property type="term" value="F:malonate-semialdehyde dehydrogenase (acetylating) activity"/>
    <property type="evidence" value="ECO:0007669"/>
    <property type="project" value="UniProtKB-UniRule"/>
</dbReference>
<dbReference type="GO" id="GO:0004491">
    <property type="term" value="F:methylmalonate-semialdehyde dehydrogenase (acylating, NAD) activity"/>
    <property type="evidence" value="ECO:0007669"/>
    <property type="project" value="UniProtKB-UniRule"/>
</dbReference>
<dbReference type="GO" id="GO:0019310">
    <property type="term" value="P:inositol catabolic process"/>
    <property type="evidence" value="ECO:0007669"/>
    <property type="project" value="UniProtKB-UniRule"/>
</dbReference>
<dbReference type="GO" id="GO:0006210">
    <property type="term" value="P:thymine catabolic process"/>
    <property type="evidence" value="ECO:0007669"/>
    <property type="project" value="TreeGrafter"/>
</dbReference>
<dbReference type="GO" id="GO:0006574">
    <property type="term" value="P:valine catabolic process"/>
    <property type="evidence" value="ECO:0007669"/>
    <property type="project" value="TreeGrafter"/>
</dbReference>
<dbReference type="CDD" id="cd07085">
    <property type="entry name" value="ALDH_F6_MMSDH"/>
    <property type="match status" value="1"/>
</dbReference>
<dbReference type="FunFam" id="3.40.309.10:FF:000002">
    <property type="entry name" value="Methylmalonate-semialdehyde dehydrogenase (Acylating)"/>
    <property type="match status" value="1"/>
</dbReference>
<dbReference type="FunFam" id="3.40.605.10:FF:000003">
    <property type="entry name" value="Methylmalonate-semialdehyde dehydrogenase [acylating]"/>
    <property type="match status" value="1"/>
</dbReference>
<dbReference type="Gene3D" id="3.40.605.10">
    <property type="entry name" value="Aldehyde Dehydrogenase, Chain A, domain 1"/>
    <property type="match status" value="1"/>
</dbReference>
<dbReference type="Gene3D" id="3.40.309.10">
    <property type="entry name" value="Aldehyde Dehydrogenase, Chain A, domain 2"/>
    <property type="match status" value="1"/>
</dbReference>
<dbReference type="HAMAP" id="MF_01670">
    <property type="entry name" value="IolA"/>
    <property type="match status" value="1"/>
</dbReference>
<dbReference type="InterPro" id="IPR016161">
    <property type="entry name" value="Ald_DH/histidinol_DH"/>
</dbReference>
<dbReference type="InterPro" id="IPR016163">
    <property type="entry name" value="Ald_DH_C"/>
</dbReference>
<dbReference type="InterPro" id="IPR016160">
    <property type="entry name" value="Ald_DH_CS_CYS"/>
</dbReference>
<dbReference type="InterPro" id="IPR016162">
    <property type="entry name" value="Ald_DH_N"/>
</dbReference>
<dbReference type="InterPro" id="IPR015590">
    <property type="entry name" value="Aldehyde_DH_dom"/>
</dbReference>
<dbReference type="InterPro" id="IPR010061">
    <property type="entry name" value="MeMal-semiAld_DH"/>
</dbReference>
<dbReference type="InterPro" id="IPR023510">
    <property type="entry name" value="MSDH_GmP_bac"/>
</dbReference>
<dbReference type="NCBIfam" id="TIGR01722">
    <property type="entry name" value="MMSDH"/>
    <property type="match status" value="1"/>
</dbReference>
<dbReference type="PANTHER" id="PTHR43866">
    <property type="entry name" value="MALONATE-SEMIALDEHYDE DEHYDROGENASE"/>
    <property type="match status" value="1"/>
</dbReference>
<dbReference type="PANTHER" id="PTHR43866:SF4">
    <property type="entry name" value="MALONATE-SEMIALDEHYDE DEHYDROGENASE"/>
    <property type="match status" value="1"/>
</dbReference>
<dbReference type="Pfam" id="PF00171">
    <property type="entry name" value="Aldedh"/>
    <property type="match status" value="1"/>
</dbReference>
<dbReference type="SUPFAM" id="SSF53720">
    <property type="entry name" value="ALDH-like"/>
    <property type="match status" value="1"/>
</dbReference>
<dbReference type="PROSITE" id="PS00070">
    <property type="entry name" value="ALDEHYDE_DEHYDR_CYS"/>
    <property type="match status" value="1"/>
</dbReference>
<gene>
    <name evidence="1" type="primary">iolA</name>
    <name type="ordered locus">BPUM_1749</name>
</gene>
<proteinExistence type="inferred from homology"/>